<reference evidence="4" key="1">
    <citation type="journal article" date="1998" name="Science">
        <title>Genome sequence of the nematode C. elegans: a platform for investigating biology.</title>
        <authorList>
            <consortium name="The C. elegans sequencing consortium"/>
        </authorList>
    </citation>
    <scope>NUCLEOTIDE SEQUENCE [LARGE SCALE GENOMIC DNA]</scope>
    <source>
        <strain evidence="4">Bristol N2</strain>
    </source>
</reference>
<reference evidence="3" key="2">
    <citation type="journal article" date="2014" name="Dev. Biol.">
        <title>SUMV-1 antagonizes the activity of synthetic multivulva genes in Caenorhabditis elegans.</title>
        <authorList>
            <person name="Yucel D."/>
            <person name="Hoe M."/>
            <person name="Llamosas E."/>
            <person name="Kant S."/>
            <person name="Jamieson C."/>
            <person name="Young P.A."/>
            <person name="Crossley M."/>
            <person name="Nicholas H.R."/>
        </authorList>
    </citation>
    <scope>FUNCTION</scope>
</reference>
<evidence type="ECO:0000256" key="1">
    <source>
        <dbReference type="SAM" id="MobiDB-lite"/>
    </source>
</evidence>
<evidence type="ECO:0000269" key="2">
    <source>
    </source>
</evidence>
<evidence type="ECO:0000305" key="3"/>
<evidence type="ECO:0000312" key="4">
    <source>
        <dbReference type="Proteomes" id="UP000001940"/>
    </source>
</evidence>
<evidence type="ECO:0000312" key="5">
    <source>
        <dbReference type="WormBase" id="F54D11.2"/>
    </source>
</evidence>
<name>SUMV2_CAEEL</name>
<protein>
    <recommendedName>
        <fullName evidence="3">Protein sumv-2</fullName>
    </recommendedName>
    <alternativeName>
        <fullName evidence="5">Suppressor of synthetic multivulva protein 2</fullName>
    </alternativeName>
</protein>
<organism evidence="4">
    <name type="scientific">Caenorhabditis elegans</name>
    <dbReference type="NCBI Taxonomy" id="6239"/>
    <lineage>
        <taxon>Eukaryota</taxon>
        <taxon>Metazoa</taxon>
        <taxon>Ecdysozoa</taxon>
        <taxon>Nematoda</taxon>
        <taxon>Chromadorea</taxon>
        <taxon>Rhabditida</taxon>
        <taxon>Rhabditina</taxon>
        <taxon>Rhabditomorpha</taxon>
        <taxon>Rhabditoidea</taxon>
        <taxon>Rhabditidae</taxon>
        <taxon>Peloderinae</taxon>
        <taxon>Caenorhabditis</taxon>
    </lineage>
</organism>
<comment type="function">
    <text evidence="2">Influences the activity of genes involved in vulval development.</text>
</comment>
<proteinExistence type="predicted"/>
<keyword id="KW-0217">Developmental protein</keyword>
<keyword id="KW-1185">Reference proteome</keyword>
<sequence>MKPGRKSLPKKNRASNITEKMPTTSTEAQSSSSKNQDRCRSFSQELGVDDEPEEQQAPVATPKQTKKAQKTAKTTEEVKSPRKSARKSELKKPEPEEKAKEPRKSASKRKSSSLMNKDEPSTSTEAPSADVPGTSEASDEASEIQEAPENPNSALAIKKRLMGGGESSKSAPTKNPPKARKSNVKKPEKEAEALAPPEPPAEPQEAAETPAPEPLVPEKKPKIEDAPTTSSPKKSTPTSAPPTRASARVSKPNRLYADGSFNTEILGRTRITEQNPVKEAQAKESTPELADLPLPAGRRKSTAAPRAPPAPKPIPVINGVLRGYIPSVKVPLAEYEVDGEIINLNEGVNETMDTILAKVCEDGVEKHEDIDPKVVKAKKLAKIDYTKRLKLQVKKLDIQMRIKIPSTPEELGKRKRQAPKTDDFYWSAQSRTKLKGSSKEREETPAFDEESPIGGDEKRQQKARESISHLFDAEMDASIKEAKKYSVSFDKYIKPKITGALKHAKIKLMSRKRQSAEPDDFYYHELLVDQVSPSNSNVENVDVDVDIEETDDKVDPTEFEISEEGVIGIRDEAVDMAEQIALVIPRPTKHDGSPMSMDEIQMRAMEHVESRTKCLDGSLEIVLNQLGHEMAPPTRGVEEQGCQWHTVTSANAQALKNLYTIANNCTEDAITWTHQFMIENLEVHMLASYLSILKYAKRLNSSRFGYVISSTDQLDPEWTQVTSLLKSFVYKRHTEPGTEVLNNTIPYHRMTDTVFLLVPPTLTFGDHQRAPPRHHARIFRWLQSIGHQDSEFISFDEDIDATCSVAEYLSDVIVERICDKVRQKNKYRPNCNVVLVGYGASTYLIHRAANLVEGISAIISIGFPVMTSLGRRGTADDEILLTYCPTLFIVGAEGRRFNNEAITELRTSMISPSGLVVVGHSNDMILVPTSMLLRLGISQTVVFRMVLEKILDFLNLEPVRQQEFADLVPIELNNVFDLDSALLKSDKALSGLAFASSTHSASSSAAPSPVGASGRRATVTGAGSEDIAKRRKESIILSQQIAAPSISGPPPPAPSPRTEDRFLAFQNLVASTITTGDDMPRRASMGASPRVIERGDFRDHRPPPPPPLPILQNPVATPMSQQPPLPSPAPPPPRGPVDPASISLI</sequence>
<gene>
    <name evidence="5" type="primary">sumv-2</name>
    <name evidence="5" type="ORF">F54D11.2</name>
</gene>
<dbReference type="EMBL" id="FO081360">
    <property type="protein sequence ID" value="CCD71035.1"/>
    <property type="molecule type" value="Genomic_DNA"/>
</dbReference>
<dbReference type="PIR" id="T29329">
    <property type="entry name" value="T29329"/>
</dbReference>
<dbReference type="RefSeq" id="NP_001256043.1">
    <property type="nucleotide sequence ID" value="NM_001269114.4"/>
</dbReference>
<dbReference type="FunCoup" id="Q22992">
    <property type="interactions" value="1262"/>
</dbReference>
<dbReference type="IntAct" id="Q22992">
    <property type="interactions" value="1"/>
</dbReference>
<dbReference type="STRING" id="6239.F54D11.2.3"/>
<dbReference type="ESTHER" id="caeel-q22992">
    <property type="family name" value="NLS3-Tex30"/>
</dbReference>
<dbReference type="PaxDb" id="6239-F54D11.2.1"/>
<dbReference type="PeptideAtlas" id="Q22992"/>
<dbReference type="EnsemblMetazoa" id="F54D11.2.1">
    <property type="protein sequence ID" value="F54D11.2.1"/>
    <property type="gene ID" value="WBGene00018812"/>
</dbReference>
<dbReference type="EnsemblMetazoa" id="F54D11.2.2">
    <property type="protein sequence ID" value="F54D11.2.2"/>
    <property type="gene ID" value="WBGene00018812"/>
</dbReference>
<dbReference type="GeneID" id="24104625"/>
<dbReference type="KEGG" id="cel:CELE_F54D11.2"/>
<dbReference type="UCSC" id="F54D11.2.1">
    <property type="organism name" value="c. elegans"/>
</dbReference>
<dbReference type="AGR" id="WB:WBGene00018812"/>
<dbReference type="CTD" id="24104625"/>
<dbReference type="WormBase" id="F54D11.2">
    <property type="protein sequence ID" value="CE30805"/>
    <property type="gene ID" value="WBGene00018812"/>
    <property type="gene designation" value="sumv-2"/>
</dbReference>
<dbReference type="eggNOG" id="KOG3253">
    <property type="taxonomic scope" value="Eukaryota"/>
</dbReference>
<dbReference type="GeneTree" id="ENSGT00390000007636"/>
<dbReference type="HOGENOM" id="CLU_277219_0_0_1"/>
<dbReference type="InParanoid" id="Q22992"/>
<dbReference type="OMA" id="NPWPEIT"/>
<dbReference type="OrthoDB" id="6415022at2759"/>
<dbReference type="PRO" id="PR:Q22992"/>
<dbReference type="Proteomes" id="UP000001940">
    <property type="component" value="Chromosome V"/>
</dbReference>
<dbReference type="Bgee" id="WBGene00018812">
    <property type="expression patterns" value="Expressed in germ line (C elegans) and 4 other cell types or tissues"/>
</dbReference>
<dbReference type="GO" id="GO:0044545">
    <property type="term" value="C:NSL complex"/>
    <property type="evidence" value="ECO:0000318"/>
    <property type="project" value="GO_Central"/>
</dbReference>
<dbReference type="GO" id="GO:0045944">
    <property type="term" value="P:positive regulation of transcription by RNA polymerase II"/>
    <property type="evidence" value="ECO:0000318"/>
    <property type="project" value="GO_Central"/>
</dbReference>
<dbReference type="InterPro" id="IPR056519">
    <property type="entry name" value="KANSL3_1st"/>
</dbReference>
<dbReference type="InterPro" id="IPR026555">
    <property type="entry name" value="NSL3/Tex30"/>
</dbReference>
<dbReference type="PANTHER" id="PTHR13136:SF16">
    <property type="entry name" value="KAT8 REGULATORY NSL COMPLEX SUBUNIT 3"/>
    <property type="match status" value="1"/>
</dbReference>
<dbReference type="PANTHER" id="PTHR13136">
    <property type="entry name" value="TESTIS DEVELOPMENT PROTEIN PRTD"/>
    <property type="match status" value="1"/>
</dbReference>
<dbReference type="Pfam" id="PF23154">
    <property type="entry name" value="KANSL3_1st"/>
    <property type="match status" value="1"/>
</dbReference>
<feature type="chain" id="PRO_0000433361" description="Protein sumv-2" evidence="3">
    <location>
        <begin position="1"/>
        <end position="1145"/>
    </location>
</feature>
<feature type="region of interest" description="Disordered" evidence="1">
    <location>
        <begin position="1"/>
        <end position="310"/>
    </location>
</feature>
<feature type="region of interest" description="Disordered" evidence="1">
    <location>
        <begin position="429"/>
        <end position="464"/>
    </location>
</feature>
<feature type="region of interest" description="Disordered" evidence="1">
    <location>
        <begin position="999"/>
        <end position="1025"/>
    </location>
</feature>
<feature type="region of interest" description="Disordered" evidence="1">
    <location>
        <begin position="1040"/>
        <end position="1059"/>
    </location>
</feature>
<feature type="region of interest" description="Disordered" evidence="1">
    <location>
        <begin position="1073"/>
        <end position="1145"/>
    </location>
</feature>
<feature type="compositionally biased region" description="Basic residues" evidence="1">
    <location>
        <begin position="1"/>
        <end position="13"/>
    </location>
</feature>
<feature type="compositionally biased region" description="Polar residues" evidence="1">
    <location>
        <begin position="14"/>
        <end position="34"/>
    </location>
</feature>
<feature type="compositionally biased region" description="Basic and acidic residues" evidence="1">
    <location>
        <begin position="73"/>
        <end position="104"/>
    </location>
</feature>
<feature type="compositionally biased region" description="Basic and acidic residues" evidence="1">
    <location>
        <begin position="216"/>
        <end position="225"/>
    </location>
</feature>
<feature type="compositionally biased region" description="Low complexity" evidence="1">
    <location>
        <begin position="226"/>
        <end position="248"/>
    </location>
</feature>
<feature type="compositionally biased region" description="Basic and acidic residues" evidence="1">
    <location>
        <begin position="455"/>
        <end position="464"/>
    </location>
</feature>
<feature type="compositionally biased region" description="Low complexity" evidence="1">
    <location>
        <begin position="999"/>
        <end position="1013"/>
    </location>
</feature>
<feature type="compositionally biased region" description="Basic and acidic residues" evidence="1">
    <location>
        <begin position="1091"/>
        <end position="1102"/>
    </location>
</feature>
<feature type="compositionally biased region" description="Pro residues" evidence="1">
    <location>
        <begin position="1121"/>
        <end position="1136"/>
    </location>
</feature>
<accession>Q22992</accession>